<organism>
    <name type="scientific">Escherichia coli O139:H28 (strain E24377A / ETEC)</name>
    <dbReference type="NCBI Taxonomy" id="331111"/>
    <lineage>
        <taxon>Bacteria</taxon>
        <taxon>Pseudomonadati</taxon>
        <taxon>Pseudomonadota</taxon>
        <taxon>Gammaproteobacteria</taxon>
        <taxon>Enterobacterales</taxon>
        <taxon>Enterobacteriaceae</taxon>
        <taxon>Escherichia</taxon>
    </lineage>
</organism>
<dbReference type="EMBL" id="CP000800">
    <property type="protein sequence ID" value="ABV18258.1"/>
    <property type="molecule type" value="Genomic_DNA"/>
</dbReference>
<dbReference type="RefSeq" id="WP_000858214.1">
    <property type="nucleotide sequence ID" value="NC_009801.1"/>
</dbReference>
<dbReference type="SMR" id="A7ZT69"/>
<dbReference type="GeneID" id="93778248"/>
<dbReference type="KEGG" id="ecw:EcE24377A_4016"/>
<dbReference type="HOGENOM" id="CLU_019375_7_0_6"/>
<dbReference type="Proteomes" id="UP000001122">
    <property type="component" value="Chromosome"/>
</dbReference>
<dbReference type="GO" id="GO:0005886">
    <property type="term" value="C:plasma membrane"/>
    <property type="evidence" value="ECO:0007669"/>
    <property type="project" value="UniProtKB-SubCell"/>
</dbReference>
<dbReference type="GO" id="GO:0015138">
    <property type="term" value="F:fumarate transmembrane transporter activity"/>
    <property type="evidence" value="ECO:0007669"/>
    <property type="project" value="TreeGrafter"/>
</dbReference>
<dbReference type="GO" id="GO:0015366">
    <property type="term" value="F:malate:proton symporter activity"/>
    <property type="evidence" value="ECO:0007669"/>
    <property type="project" value="TreeGrafter"/>
</dbReference>
<dbReference type="GO" id="GO:0015141">
    <property type="term" value="F:succinate transmembrane transporter activity"/>
    <property type="evidence" value="ECO:0007669"/>
    <property type="project" value="TreeGrafter"/>
</dbReference>
<dbReference type="GO" id="GO:0070778">
    <property type="term" value="P:L-aspartate transmembrane transport"/>
    <property type="evidence" value="ECO:0007669"/>
    <property type="project" value="TreeGrafter"/>
</dbReference>
<dbReference type="FunFam" id="1.10.3860.10:FF:000001">
    <property type="entry name" value="C4-dicarboxylate transport protein"/>
    <property type="match status" value="1"/>
</dbReference>
<dbReference type="Gene3D" id="1.10.3860.10">
    <property type="entry name" value="Sodium:dicarboxylate symporter"/>
    <property type="match status" value="1"/>
</dbReference>
<dbReference type="HAMAP" id="MF_01300">
    <property type="entry name" value="C4_dicarb_transport"/>
    <property type="match status" value="1"/>
</dbReference>
<dbReference type="InterPro" id="IPR023954">
    <property type="entry name" value="C4_dicarb_transport"/>
</dbReference>
<dbReference type="InterPro" id="IPR001991">
    <property type="entry name" value="Na-dicarboxylate_symporter"/>
</dbReference>
<dbReference type="InterPro" id="IPR018107">
    <property type="entry name" value="Na-dicarboxylate_symporter_CS"/>
</dbReference>
<dbReference type="InterPro" id="IPR036458">
    <property type="entry name" value="Na:dicarbo_symporter_sf"/>
</dbReference>
<dbReference type="NCBIfam" id="NF002461">
    <property type="entry name" value="PRK01663.1"/>
    <property type="match status" value="1"/>
</dbReference>
<dbReference type="NCBIfam" id="NF009587">
    <property type="entry name" value="PRK13027.1"/>
    <property type="match status" value="1"/>
</dbReference>
<dbReference type="PANTHER" id="PTHR42865:SF1">
    <property type="entry name" value="AEROBIC C4-DICARBOXYLATE TRANSPORT PROTEIN"/>
    <property type="match status" value="1"/>
</dbReference>
<dbReference type="PANTHER" id="PTHR42865">
    <property type="entry name" value="PROTON/GLUTAMATE-ASPARTATE SYMPORTER"/>
    <property type="match status" value="1"/>
</dbReference>
<dbReference type="Pfam" id="PF00375">
    <property type="entry name" value="SDF"/>
    <property type="match status" value="1"/>
</dbReference>
<dbReference type="PRINTS" id="PR00173">
    <property type="entry name" value="EDTRNSPORT"/>
</dbReference>
<dbReference type="SUPFAM" id="SSF118215">
    <property type="entry name" value="Proton glutamate symport protein"/>
    <property type="match status" value="1"/>
</dbReference>
<dbReference type="PROSITE" id="PS00713">
    <property type="entry name" value="NA_DICARBOXYL_SYMP_1"/>
    <property type="match status" value="1"/>
</dbReference>
<dbReference type="PROSITE" id="PS00714">
    <property type="entry name" value="NA_DICARBOXYL_SYMP_2"/>
    <property type="match status" value="1"/>
</dbReference>
<name>DCTA_ECO24</name>
<keyword id="KW-0997">Cell inner membrane</keyword>
<keyword id="KW-1003">Cell membrane</keyword>
<keyword id="KW-0472">Membrane</keyword>
<keyword id="KW-1185">Reference proteome</keyword>
<keyword id="KW-0769">Symport</keyword>
<keyword id="KW-0812">Transmembrane</keyword>
<keyword id="KW-1133">Transmembrane helix</keyword>
<keyword id="KW-0813">Transport</keyword>
<accession>A7ZT69</accession>
<comment type="function">
    <text evidence="1">Responsible for the transport of dicarboxylates such as succinate, fumarate, and malate from the periplasm across the membrane.</text>
</comment>
<comment type="subcellular location">
    <subcellularLocation>
        <location evidence="1">Cell inner membrane</location>
        <topology evidence="1">Multi-pass membrane protein</topology>
    </subcellularLocation>
</comment>
<comment type="similarity">
    <text evidence="1">Belongs to the dicarboxylate/amino acid:cation symporter (DAACS) (TC 2.A.23) family.</text>
</comment>
<sequence>MKTSLFKSLYFQVLTAIAIGILLGHFYPEIGEQMKPLGDGFVKLIKMIIAPVIFCTVVTGIAGMESMKAVGRTGAVALLYFEIVSTIALIIGLIIVNVVQPGAGMNVDPATLDAKAVAVYADQAKDQGIVAFIMDVIPASVIGAFASGNILQVLLFAVLFGFALHRLGSKGQLIFNVIESFSQVIFGIINMIMRLAPIGAFGAMAFTIGKYGVGTLVQLGQLIICFYITCILFVVLVLGSIAKATGFSIFKFIRYIREELLIVLGTSSSESALPRMLDKMEKLGCRKSVVGLVIPTGYSFNLDGTSIYLTMAAVFIAQATNSQMDIVHQITLLIVLLLSSKGAAGVTGSGFIVLAATLSAVGHLPVAGLALILGIDRFMSEARALTNLVGNGVATIVVAKWVKELDHKKLDDVLNNRAPDGKTHELSS</sequence>
<reference key="1">
    <citation type="journal article" date="2008" name="J. Bacteriol.">
        <title>The pangenome structure of Escherichia coli: comparative genomic analysis of E. coli commensal and pathogenic isolates.</title>
        <authorList>
            <person name="Rasko D.A."/>
            <person name="Rosovitz M.J."/>
            <person name="Myers G.S.A."/>
            <person name="Mongodin E.F."/>
            <person name="Fricke W.F."/>
            <person name="Gajer P."/>
            <person name="Crabtree J."/>
            <person name="Sebaihia M."/>
            <person name="Thomson N.R."/>
            <person name="Chaudhuri R."/>
            <person name="Henderson I.R."/>
            <person name="Sperandio V."/>
            <person name="Ravel J."/>
        </authorList>
    </citation>
    <scope>NUCLEOTIDE SEQUENCE [LARGE SCALE GENOMIC DNA]</scope>
    <source>
        <strain>E24377A / ETEC</strain>
    </source>
</reference>
<feature type="chain" id="PRO_1000067444" description="C4-dicarboxylate transport protein">
    <location>
        <begin position="1"/>
        <end position="428"/>
    </location>
</feature>
<feature type="transmembrane region" description="Helical" evidence="1">
    <location>
        <begin position="8"/>
        <end position="28"/>
    </location>
</feature>
<feature type="transmembrane region" description="Helical" evidence="1">
    <location>
        <begin position="44"/>
        <end position="64"/>
    </location>
</feature>
<feature type="transmembrane region" description="Helical" evidence="1">
    <location>
        <begin position="76"/>
        <end position="96"/>
    </location>
</feature>
<feature type="transmembrane region" description="Helical" evidence="1">
    <location>
        <begin position="142"/>
        <end position="162"/>
    </location>
</feature>
<feature type="transmembrane region" description="Helical" evidence="1">
    <location>
        <begin position="184"/>
        <end position="204"/>
    </location>
</feature>
<feature type="transmembrane region" description="Helical" evidence="1">
    <location>
        <begin position="222"/>
        <end position="242"/>
    </location>
</feature>
<feature type="transmembrane region" description="Helical" evidence="1">
    <location>
        <begin position="326"/>
        <end position="346"/>
    </location>
</feature>
<feature type="transmembrane region" description="Helical" evidence="1">
    <location>
        <begin position="352"/>
        <end position="372"/>
    </location>
</feature>
<evidence type="ECO:0000255" key="1">
    <source>
        <dbReference type="HAMAP-Rule" id="MF_01300"/>
    </source>
</evidence>
<protein>
    <recommendedName>
        <fullName evidence="1">C4-dicarboxylate transport protein</fullName>
    </recommendedName>
</protein>
<gene>
    <name evidence="1" type="primary">dctA</name>
    <name type="ordered locus">EcE24377A_4016</name>
</gene>
<proteinExistence type="inferred from homology"/>